<evidence type="ECO:0000255" key="1">
    <source>
        <dbReference type="HAMAP-Rule" id="MF_01218"/>
    </source>
</evidence>
<evidence type="ECO:0000305" key="2"/>
<comment type="function">
    <text evidence="1">Catalyzes the conversion of uracil and 5-phospho-alpha-D-ribose 1-diphosphate (PRPP) to UMP and diphosphate.</text>
</comment>
<comment type="catalytic activity">
    <reaction evidence="1">
        <text>UMP + diphosphate = 5-phospho-alpha-D-ribose 1-diphosphate + uracil</text>
        <dbReference type="Rhea" id="RHEA:13017"/>
        <dbReference type="ChEBI" id="CHEBI:17568"/>
        <dbReference type="ChEBI" id="CHEBI:33019"/>
        <dbReference type="ChEBI" id="CHEBI:57865"/>
        <dbReference type="ChEBI" id="CHEBI:58017"/>
        <dbReference type="EC" id="2.4.2.9"/>
    </reaction>
</comment>
<comment type="cofactor">
    <cofactor evidence="1">
        <name>Mg(2+)</name>
        <dbReference type="ChEBI" id="CHEBI:18420"/>
    </cofactor>
    <text evidence="1">Binds 1 Mg(2+) ion per subunit. The magnesium is bound as Mg-PRPP.</text>
</comment>
<comment type="activity regulation">
    <text evidence="1">Allosterically activated by GTP.</text>
</comment>
<comment type="pathway">
    <text evidence="1">Pyrimidine metabolism; UMP biosynthesis via salvage pathway; UMP from uracil: step 1/1.</text>
</comment>
<comment type="similarity">
    <text evidence="1">Belongs to the UPRTase family.</text>
</comment>
<comment type="sequence caution" evidence="2">
    <conflict type="erroneous initiation">
        <sequence resource="EMBL-CDS" id="AAG57608"/>
    </conflict>
</comment>
<comment type="sequence caution" evidence="2">
    <conflict type="erroneous initiation">
        <sequence resource="EMBL-CDS" id="BAB36783"/>
    </conflict>
</comment>
<dbReference type="EC" id="2.4.2.9" evidence="1"/>
<dbReference type="EMBL" id="AE005174">
    <property type="protein sequence ID" value="AAG57608.1"/>
    <property type="status" value="ALT_INIT"/>
    <property type="molecule type" value="Genomic_DNA"/>
</dbReference>
<dbReference type="EMBL" id="BA000007">
    <property type="protein sequence ID" value="BAB36783.1"/>
    <property type="status" value="ALT_INIT"/>
    <property type="molecule type" value="Genomic_DNA"/>
</dbReference>
<dbReference type="RefSeq" id="NP_311387.2">
    <property type="nucleotide sequence ID" value="NC_002695.1"/>
</dbReference>
<dbReference type="RefSeq" id="WP_001295473.1">
    <property type="nucleotide sequence ID" value="NZ_VOAI01000001.1"/>
</dbReference>
<dbReference type="SMR" id="P0A8F2"/>
<dbReference type="STRING" id="155864.Z3761"/>
<dbReference type="GeneID" id="915222"/>
<dbReference type="GeneID" id="93774638"/>
<dbReference type="KEGG" id="ece:Z3761"/>
<dbReference type="KEGG" id="ecs:ECs_3360"/>
<dbReference type="PATRIC" id="fig|386585.9.peg.3509"/>
<dbReference type="eggNOG" id="COG0035">
    <property type="taxonomic scope" value="Bacteria"/>
</dbReference>
<dbReference type="HOGENOM" id="CLU_067096_2_2_6"/>
<dbReference type="OMA" id="KHKIGLM"/>
<dbReference type="UniPathway" id="UPA00574">
    <property type="reaction ID" value="UER00636"/>
</dbReference>
<dbReference type="Proteomes" id="UP000000558">
    <property type="component" value="Chromosome"/>
</dbReference>
<dbReference type="Proteomes" id="UP000002519">
    <property type="component" value="Chromosome"/>
</dbReference>
<dbReference type="GO" id="GO:0005525">
    <property type="term" value="F:GTP binding"/>
    <property type="evidence" value="ECO:0007669"/>
    <property type="project" value="UniProtKB-KW"/>
</dbReference>
<dbReference type="GO" id="GO:0000287">
    <property type="term" value="F:magnesium ion binding"/>
    <property type="evidence" value="ECO:0007669"/>
    <property type="project" value="UniProtKB-UniRule"/>
</dbReference>
<dbReference type="GO" id="GO:0004845">
    <property type="term" value="F:uracil phosphoribosyltransferase activity"/>
    <property type="evidence" value="ECO:0007669"/>
    <property type="project" value="UniProtKB-UniRule"/>
</dbReference>
<dbReference type="GO" id="GO:0044206">
    <property type="term" value="P:UMP salvage"/>
    <property type="evidence" value="ECO:0007669"/>
    <property type="project" value="UniProtKB-UniRule"/>
</dbReference>
<dbReference type="GO" id="GO:0006223">
    <property type="term" value="P:uracil salvage"/>
    <property type="evidence" value="ECO:0007669"/>
    <property type="project" value="InterPro"/>
</dbReference>
<dbReference type="CDD" id="cd06223">
    <property type="entry name" value="PRTases_typeI"/>
    <property type="match status" value="1"/>
</dbReference>
<dbReference type="FunFam" id="3.40.50.2020:FF:000003">
    <property type="entry name" value="Uracil phosphoribosyltransferase"/>
    <property type="match status" value="1"/>
</dbReference>
<dbReference type="Gene3D" id="3.40.50.2020">
    <property type="match status" value="1"/>
</dbReference>
<dbReference type="HAMAP" id="MF_01218_B">
    <property type="entry name" value="Upp_B"/>
    <property type="match status" value="1"/>
</dbReference>
<dbReference type="InterPro" id="IPR000836">
    <property type="entry name" value="PRibTrfase_dom"/>
</dbReference>
<dbReference type="InterPro" id="IPR029057">
    <property type="entry name" value="PRTase-like"/>
</dbReference>
<dbReference type="InterPro" id="IPR034332">
    <property type="entry name" value="Upp_B"/>
</dbReference>
<dbReference type="InterPro" id="IPR050054">
    <property type="entry name" value="UPRTase/APRTase"/>
</dbReference>
<dbReference type="InterPro" id="IPR005765">
    <property type="entry name" value="Ura_phspho_trans"/>
</dbReference>
<dbReference type="NCBIfam" id="NF001097">
    <property type="entry name" value="PRK00129.1"/>
    <property type="match status" value="1"/>
</dbReference>
<dbReference type="NCBIfam" id="TIGR01091">
    <property type="entry name" value="upp"/>
    <property type="match status" value="1"/>
</dbReference>
<dbReference type="PANTHER" id="PTHR32315">
    <property type="entry name" value="ADENINE PHOSPHORIBOSYLTRANSFERASE"/>
    <property type="match status" value="1"/>
</dbReference>
<dbReference type="PANTHER" id="PTHR32315:SF4">
    <property type="entry name" value="URACIL PHOSPHORIBOSYLTRANSFERASE, CHLOROPLASTIC"/>
    <property type="match status" value="1"/>
</dbReference>
<dbReference type="Pfam" id="PF14681">
    <property type="entry name" value="UPRTase"/>
    <property type="match status" value="1"/>
</dbReference>
<dbReference type="SUPFAM" id="SSF53271">
    <property type="entry name" value="PRTase-like"/>
    <property type="match status" value="1"/>
</dbReference>
<feature type="chain" id="PRO_0000120826" description="Uracil phosphoribosyltransferase">
    <location>
        <begin position="1"/>
        <end position="208"/>
    </location>
</feature>
<feature type="binding site" evidence="1">
    <location>
        <position position="78"/>
    </location>
    <ligand>
        <name>5-phospho-alpha-D-ribose 1-diphosphate</name>
        <dbReference type="ChEBI" id="CHEBI:58017"/>
    </ligand>
</feature>
<feature type="binding site" evidence="1">
    <location>
        <position position="103"/>
    </location>
    <ligand>
        <name>5-phospho-alpha-D-ribose 1-diphosphate</name>
        <dbReference type="ChEBI" id="CHEBI:58017"/>
    </ligand>
</feature>
<feature type="binding site" evidence="1">
    <location>
        <begin position="130"/>
        <end position="138"/>
    </location>
    <ligand>
        <name>5-phospho-alpha-D-ribose 1-diphosphate</name>
        <dbReference type="ChEBI" id="CHEBI:58017"/>
    </ligand>
</feature>
<feature type="binding site" evidence="1">
    <location>
        <position position="193"/>
    </location>
    <ligand>
        <name>uracil</name>
        <dbReference type="ChEBI" id="CHEBI:17568"/>
    </ligand>
</feature>
<feature type="binding site" evidence="1">
    <location>
        <begin position="198"/>
        <end position="200"/>
    </location>
    <ligand>
        <name>uracil</name>
        <dbReference type="ChEBI" id="CHEBI:17568"/>
    </ligand>
</feature>
<feature type="binding site" evidence="1">
    <location>
        <position position="199"/>
    </location>
    <ligand>
        <name>5-phospho-alpha-D-ribose 1-diphosphate</name>
        <dbReference type="ChEBI" id="CHEBI:58017"/>
    </ligand>
</feature>
<organism>
    <name type="scientific">Escherichia coli O157:H7</name>
    <dbReference type="NCBI Taxonomy" id="83334"/>
    <lineage>
        <taxon>Bacteria</taxon>
        <taxon>Pseudomonadati</taxon>
        <taxon>Pseudomonadota</taxon>
        <taxon>Gammaproteobacteria</taxon>
        <taxon>Enterobacterales</taxon>
        <taxon>Enterobacteriaceae</taxon>
        <taxon>Escherichia</taxon>
    </lineage>
</organism>
<accession>P0A8F2</accession>
<accession>P25532</accession>
<accession>P78095</accession>
<accession>Q8XAC7</accession>
<proteinExistence type="inferred from homology"/>
<keyword id="KW-0021">Allosteric enzyme</keyword>
<keyword id="KW-0328">Glycosyltransferase</keyword>
<keyword id="KW-0342">GTP-binding</keyword>
<keyword id="KW-0460">Magnesium</keyword>
<keyword id="KW-0547">Nucleotide-binding</keyword>
<keyword id="KW-1185">Reference proteome</keyword>
<keyword id="KW-0808">Transferase</keyword>
<gene>
    <name evidence="1" type="primary">upp</name>
    <name type="ordered locus">Z3761</name>
    <name type="ordered locus">ECs3360</name>
</gene>
<reference key="1">
    <citation type="journal article" date="2001" name="Nature">
        <title>Genome sequence of enterohaemorrhagic Escherichia coli O157:H7.</title>
        <authorList>
            <person name="Perna N.T."/>
            <person name="Plunkett G. III"/>
            <person name="Burland V."/>
            <person name="Mau B."/>
            <person name="Glasner J.D."/>
            <person name="Rose D.J."/>
            <person name="Mayhew G.F."/>
            <person name="Evans P.S."/>
            <person name="Gregor J."/>
            <person name="Kirkpatrick H.A."/>
            <person name="Posfai G."/>
            <person name="Hackett J."/>
            <person name="Klink S."/>
            <person name="Boutin A."/>
            <person name="Shao Y."/>
            <person name="Miller L."/>
            <person name="Grotbeck E.J."/>
            <person name="Davis N.W."/>
            <person name="Lim A."/>
            <person name="Dimalanta E.T."/>
            <person name="Potamousis K."/>
            <person name="Apodaca J."/>
            <person name="Anantharaman T.S."/>
            <person name="Lin J."/>
            <person name="Yen G."/>
            <person name="Schwartz D.C."/>
            <person name="Welch R.A."/>
            <person name="Blattner F.R."/>
        </authorList>
    </citation>
    <scope>NUCLEOTIDE SEQUENCE [LARGE SCALE GENOMIC DNA]</scope>
    <source>
        <strain>O157:H7 / EDL933 / ATCC 700927 / EHEC</strain>
    </source>
</reference>
<reference key="2">
    <citation type="journal article" date="2001" name="DNA Res.">
        <title>Complete genome sequence of enterohemorrhagic Escherichia coli O157:H7 and genomic comparison with a laboratory strain K-12.</title>
        <authorList>
            <person name="Hayashi T."/>
            <person name="Makino K."/>
            <person name="Ohnishi M."/>
            <person name="Kurokawa K."/>
            <person name="Ishii K."/>
            <person name="Yokoyama K."/>
            <person name="Han C.-G."/>
            <person name="Ohtsubo E."/>
            <person name="Nakayama K."/>
            <person name="Murata T."/>
            <person name="Tanaka M."/>
            <person name="Tobe T."/>
            <person name="Iida T."/>
            <person name="Takami H."/>
            <person name="Honda T."/>
            <person name="Sasakawa C."/>
            <person name="Ogasawara N."/>
            <person name="Yasunaga T."/>
            <person name="Kuhara S."/>
            <person name="Shiba T."/>
            <person name="Hattori M."/>
            <person name="Shinagawa H."/>
        </authorList>
    </citation>
    <scope>NUCLEOTIDE SEQUENCE [LARGE SCALE GENOMIC DNA]</scope>
    <source>
        <strain>O157:H7 / Sakai / RIMD 0509952 / EHEC</strain>
    </source>
</reference>
<protein>
    <recommendedName>
        <fullName evidence="1">Uracil phosphoribosyltransferase</fullName>
        <ecNumber evidence="1">2.4.2.9</ecNumber>
    </recommendedName>
    <alternativeName>
        <fullName evidence="1">UMP pyrophosphorylase</fullName>
    </alternativeName>
    <alternativeName>
        <fullName evidence="1">UPRTase</fullName>
    </alternativeName>
</protein>
<sequence length="208" mass="22533">MKIVEVKHPLVKHKLGLMREQDISTKRFRELASEVGSLLTYEATADLETEKVTIEGWNGPVEIDQIKGKKITVVPILRAGLGMMDGVLENVPSARISVVGMYRNEETLEPVPYFQKLVSNIDERMALIVDPMLATGGSVIATIDLLKKAGCSSIKVLVLVAAPEGIAALEKAHPDVELYTASIDQGLNEHGYIIPGLGDAGDKIFGTK</sequence>
<name>UPP_ECO57</name>